<evidence type="ECO:0000250" key="1"/>
<evidence type="ECO:0000250" key="2">
    <source>
        <dbReference type="UniProtKB" id="O42248"/>
    </source>
</evidence>
<evidence type="ECO:0000305" key="3"/>
<name>GBLP_ORENI</name>
<accession>O42249</accession>
<dbReference type="EMBL" id="AF025331">
    <property type="protein sequence ID" value="AAB81618.1"/>
    <property type="molecule type" value="mRNA"/>
</dbReference>
<dbReference type="RefSeq" id="NP_001266445.1">
    <property type="nucleotide sequence ID" value="NM_001279516.1"/>
</dbReference>
<dbReference type="SMR" id="O42249"/>
<dbReference type="FunCoup" id="O42249">
    <property type="interactions" value="1890"/>
</dbReference>
<dbReference type="STRING" id="8128.ENSONIP00000036997"/>
<dbReference type="GeneID" id="100534572"/>
<dbReference type="KEGG" id="onl:100534572"/>
<dbReference type="CTD" id="10399"/>
<dbReference type="eggNOG" id="KOG0279">
    <property type="taxonomic scope" value="Eukaryota"/>
</dbReference>
<dbReference type="InParanoid" id="O42249"/>
<dbReference type="OrthoDB" id="7875889at2759"/>
<dbReference type="Proteomes" id="UP000005207">
    <property type="component" value="Unplaced"/>
</dbReference>
<dbReference type="GO" id="GO:0005737">
    <property type="term" value="C:cytoplasm"/>
    <property type="evidence" value="ECO:0007669"/>
    <property type="project" value="UniProtKB-SubCell"/>
</dbReference>
<dbReference type="GO" id="GO:1990904">
    <property type="term" value="C:ribonucleoprotein complex"/>
    <property type="evidence" value="ECO:0007669"/>
    <property type="project" value="UniProtKB-KW"/>
</dbReference>
<dbReference type="GO" id="GO:0005840">
    <property type="term" value="C:ribosome"/>
    <property type="evidence" value="ECO:0007669"/>
    <property type="project" value="UniProtKB-KW"/>
</dbReference>
<dbReference type="GO" id="GO:0043022">
    <property type="term" value="F:ribosome binding"/>
    <property type="evidence" value="ECO:0007669"/>
    <property type="project" value="InterPro"/>
</dbReference>
<dbReference type="GO" id="GO:0045182">
    <property type="term" value="F:translation regulator activity"/>
    <property type="evidence" value="ECO:0007669"/>
    <property type="project" value="InterPro"/>
</dbReference>
<dbReference type="GO" id="GO:0030178">
    <property type="term" value="P:negative regulation of Wnt signaling pathway"/>
    <property type="evidence" value="ECO:0000250"/>
    <property type="project" value="UniProtKB"/>
</dbReference>
<dbReference type="GO" id="GO:2000543">
    <property type="term" value="P:positive regulation of gastrulation"/>
    <property type="evidence" value="ECO:0000250"/>
    <property type="project" value="UniProtKB"/>
</dbReference>
<dbReference type="GO" id="GO:0051302">
    <property type="term" value="P:regulation of cell division"/>
    <property type="evidence" value="ECO:0000250"/>
    <property type="project" value="UniProtKB"/>
</dbReference>
<dbReference type="GO" id="GO:2000114">
    <property type="term" value="P:regulation of establishment of cell polarity"/>
    <property type="evidence" value="ECO:0000250"/>
    <property type="project" value="UniProtKB"/>
</dbReference>
<dbReference type="GO" id="GO:0032880">
    <property type="term" value="P:regulation of protein localization"/>
    <property type="evidence" value="ECO:0000250"/>
    <property type="project" value="UniProtKB"/>
</dbReference>
<dbReference type="CDD" id="cd00200">
    <property type="entry name" value="WD40"/>
    <property type="match status" value="1"/>
</dbReference>
<dbReference type="FunFam" id="2.130.10.10:FF:001252">
    <property type="entry name" value="Receptor of activated protein C kinase 1"/>
    <property type="match status" value="1"/>
</dbReference>
<dbReference type="Gene3D" id="2.130.10.10">
    <property type="entry name" value="YVTN repeat-like/Quinoprotein amine dehydrogenase"/>
    <property type="match status" value="1"/>
</dbReference>
<dbReference type="InterPro" id="IPR020472">
    <property type="entry name" value="G-protein_beta_WD-40_rep"/>
</dbReference>
<dbReference type="InterPro" id="IPR045223">
    <property type="entry name" value="RACK1-like"/>
</dbReference>
<dbReference type="InterPro" id="IPR015943">
    <property type="entry name" value="WD40/YVTN_repeat-like_dom_sf"/>
</dbReference>
<dbReference type="InterPro" id="IPR019775">
    <property type="entry name" value="WD40_repeat_CS"/>
</dbReference>
<dbReference type="InterPro" id="IPR036322">
    <property type="entry name" value="WD40_repeat_dom_sf"/>
</dbReference>
<dbReference type="InterPro" id="IPR001680">
    <property type="entry name" value="WD40_rpt"/>
</dbReference>
<dbReference type="PANTHER" id="PTHR19868">
    <property type="entry name" value="RECEPTOR FOR ACTIVATED PROTEIN KINASE C RACK1"/>
    <property type="match status" value="1"/>
</dbReference>
<dbReference type="Pfam" id="PF00400">
    <property type="entry name" value="WD40"/>
    <property type="match status" value="7"/>
</dbReference>
<dbReference type="PRINTS" id="PR00320">
    <property type="entry name" value="GPROTEINBRPT"/>
</dbReference>
<dbReference type="SMART" id="SM00320">
    <property type="entry name" value="WD40"/>
    <property type="match status" value="7"/>
</dbReference>
<dbReference type="SUPFAM" id="SSF50978">
    <property type="entry name" value="WD40 repeat-like"/>
    <property type="match status" value="1"/>
</dbReference>
<dbReference type="PROSITE" id="PS00678">
    <property type="entry name" value="WD_REPEATS_1"/>
    <property type="match status" value="4"/>
</dbReference>
<dbReference type="PROSITE" id="PS50082">
    <property type="entry name" value="WD_REPEATS_2"/>
    <property type="match status" value="6"/>
</dbReference>
<dbReference type="PROSITE" id="PS50294">
    <property type="entry name" value="WD_REPEATS_REGION"/>
    <property type="match status" value="1"/>
</dbReference>
<reference key="1">
    <citation type="journal article" date="1999" name="Mar. Biotechnol.">
        <title>Isolation of complementary DNAs coding for a receptor for activated C kinase (RACK) from zebrafish (Danio rerio) and Tilapia (Oreochromis niloticus): constitutive developmental and tissue expression.</title>
        <authorList>
            <person name="Hamilton L.C."/>
            <person name="Wright J.M."/>
        </authorList>
    </citation>
    <scope>NUCLEOTIDE SEQUENCE [MRNA]</scope>
    <source>
        <tissue>Brain</tissue>
    </source>
</reference>
<proteinExistence type="evidence at transcript level"/>
<organism>
    <name type="scientific">Oreochromis niloticus</name>
    <name type="common">Nile tilapia</name>
    <name type="synonym">Tilapia nilotica</name>
    <dbReference type="NCBI Taxonomy" id="8128"/>
    <lineage>
        <taxon>Eukaryota</taxon>
        <taxon>Metazoa</taxon>
        <taxon>Chordata</taxon>
        <taxon>Craniata</taxon>
        <taxon>Vertebrata</taxon>
        <taxon>Euteleostomi</taxon>
        <taxon>Actinopterygii</taxon>
        <taxon>Neopterygii</taxon>
        <taxon>Teleostei</taxon>
        <taxon>Neoteleostei</taxon>
        <taxon>Acanthomorphata</taxon>
        <taxon>Ovalentaria</taxon>
        <taxon>Cichlomorphae</taxon>
        <taxon>Cichliformes</taxon>
        <taxon>Cichlidae</taxon>
        <taxon>African cichlids</taxon>
        <taxon>Pseudocrenilabrinae</taxon>
        <taxon>Oreochromini</taxon>
        <taxon>Oreochromis</taxon>
    </lineage>
</organism>
<gene>
    <name type="primary">gnb2l1</name>
    <name type="synonym">rack1</name>
</gene>
<sequence>MTEQMTVRGTLKGHSGWVTQIATTPKYPDMILSASRDKSIIMWKLTRDETNYGIPQRSLKGHSHFVSDVVISSDGQFALSGAWDGTLRLWDLTTGLTTRRFVGHTKDVLSVAFSADNRQIVSGSRDKTIKLWNTLGVCKYTIQDEGHTEWVSCVRFSPNSSNPIIVSCGWDKMVKVWNLANCKLKTNHIGHTGYLNTVTVSPDGSLCASGGKDGQAMLWDLNEGKHLYTLDSGDVINALCFSPNRYWLCAATGPSIKIWDLEGKIIVDELRQEVISTNSKAEPPQCTSLAWSADGQTLFAGYTDNLIRVWQVTIGTR</sequence>
<feature type="chain" id="PRO_0000127737" description="Small ribosomal subunit protein RACK1">
    <location>
        <begin position="1"/>
        <end position="317"/>
    </location>
</feature>
<feature type="repeat" description="WD 1">
    <location>
        <begin position="13"/>
        <end position="44"/>
    </location>
</feature>
<feature type="repeat" description="WD 2">
    <location>
        <begin position="61"/>
        <end position="91"/>
    </location>
</feature>
<feature type="repeat" description="WD 3">
    <location>
        <begin position="103"/>
        <end position="133"/>
    </location>
</feature>
<feature type="repeat" description="WD 4">
    <location>
        <begin position="146"/>
        <end position="178"/>
    </location>
</feature>
<feature type="repeat" description="WD 5">
    <location>
        <begin position="190"/>
        <end position="220"/>
    </location>
</feature>
<feature type="repeat" description="WD 6">
    <location>
        <begin position="231"/>
        <end position="260"/>
    </location>
</feature>
<feature type="repeat" description="WD 7">
    <location>
        <begin position="281"/>
        <end position="311"/>
    </location>
</feature>
<protein>
    <recommendedName>
        <fullName evidence="3">Small ribosomal subunit protein RACK1</fullName>
    </recommendedName>
    <alternativeName>
        <fullName>Guanine nucleotide-binding protein subunit beta-2-like 1</fullName>
    </alternativeName>
    <alternativeName>
        <fullName>Receptor of activated protein kinase C</fullName>
        <shortName>RACK</shortName>
    </alternativeName>
</protein>
<keyword id="KW-0963">Cytoplasm</keyword>
<keyword id="KW-1185">Reference proteome</keyword>
<keyword id="KW-0677">Repeat</keyword>
<keyword id="KW-0687">Ribonucleoprotein</keyword>
<keyword id="KW-0689">Ribosomal protein</keyword>
<keyword id="KW-0853">WD repeat</keyword>
<comment type="function">
    <text evidence="1">Involved in the recruitment, assembly and/or regulation of a variety of signaling molecules. Interacts with a wide variety of proteins and plays a role in many cellular processes. Required for VANGL2 membrane localization, inhibits Wnt signaling and regulates cellular polarization and oriented cell division during gastrulation (By similarity).</text>
</comment>
<comment type="subcellular location">
    <subcellularLocation>
        <location evidence="2">Cytoplasm</location>
    </subcellularLocation>
</comment>
<comment type="similarity">
    <text evidence="3">Belongs to the WD repeat G protein beta family. Ribosomal protein RACK1 subfamily.</text>
</comment>